<keyword id="KW-0963">Cytoplasm</keyword>
<keyword id="KW-0206">Cytoskeleton</keyword>
<keyword id="KW-0342">GTP-binding</keyword>
<keyword id="KW-0449">Lipoprotein</keyword>
<keyword id="KW-0493">Microtubule</keyword>
<keyword id="KW-0519">Myristate</keyword>
<keyword id="KW-0547">Nucleotide-binding</keyword>
<keyword id="KW-1185">Reference proteome</keyword>
<feature type="initiator methionine" description="Removed" evidence="1">
    <location>
        <position position="1"/>
    </location>
</feature>
<feature type="chain" id="PRO_0000207423" description="ADP-ribosylation factor-like protein alp41">
    <location>
        <begin position="2"/>
        <end position="186"/>
    </location>
</feature>
<feature type="binding site" evidence="1">
    <location>
        <begin position="23"/>
        <end position="30"/>
    </location>
    <ligand>
        <name>GTP</name>
        <dbReference type="ChEBI" id="CHEBI:37565"/>
    </ligand>
</feature>
<feature type="binding site" evidence="1">
    <location>
        <begin position="66"/>
        <end position="70"/>
    </location>
    <ligand>
        <name>GTP</name>
        <dbReference type="ChEBI" id="CHEBI:37565"/>
    </ligand>
</feature>
<feature type="binding site" evidence="1">
    <location>
        <begin position="125"/>
        <end position="128"/>
    </location>
    <ligand>
        <name>GTP</name>
        <dbReference type="ChEBI" id="CHEBI:37565"/>
    </ligand>
</feature>
<feature type="lipid moiety-binding region" description="N-myristoyl glycine" evidence="1">
    <location>
        <position position="2"/>
    </location>
</feature>
<reference key="1">
    <citation type="journal article" date="2000" name="FEBS Lett.">
        <title>A conserved small GTP-binding protein Alp41 is essential for the cofactor-dependent biogenesis of microtubules in fission yeast.</title>
        <authorList>
            <person name="Radcliffe P.A."/>
            <person name="Vardy L."/>
            <person name="Toda T."/>
        </authorList>
    </citation>
    <scope>NUCLEOTIDE SEQUENCE [GENOMIC DNA]</scope>
    <scope>FUNCTION</scope>
    <source>
        <strain>972 / ATCC 24843</strain>
    </source>
</reference>
<reference key="2">
    <citation type="journal article" date="2002" name="Nature">
        <title>The genome sequence of Schizosaccharomyces pombe.</title>
        <authorList>
            <person name="Wood V."/>
            <person name="Gwilliam R."/>
            <person name="Rajandream M.A."/>
            <person name="Lyne M.H."/>
            <person name="Lyne R."/>
            <person name="Stewart A."/>
            <person name="Sgouros J.G."/>
            <person name="Peat N."/>
            <person name="Hayles J."/>
            <person name="Baker S.G."/>
            <person name="Basham D."/>
            <person name="Bowman S."/>
            <person name="Brooks K."/>
            <person name="Brown D."/>
            <person name="Brown S."/>
            <person name="Chillingworth T."/>
            <person name="Churcher C.M."/>
            <person name="Collins M."/>
            <person name="Connor R."/>
            <person name="Cronin A."/>
            <person name="Davis P."/>
            <person name="Feltwell T."/>
            <person name="Fraser A."/>
            <person name="Gentles S."/>
            <person name="Goble A."/>
            <person name="Hamlin N."/>
            <person name="Harris D.E."/>
            <person name="Hidalgo J."/>
            <person name="Hodgson G."/>
            <person name="Holroyd S."/>
            <person name="Hornsby T."/>
            <person name="Howarth S."/>
            <person name="Huckle E.J."/>
            <person name="Hunt S."/>
            <person name="Jagels K."/>
            <person name="James K.D."/>
            <person name="Jones L."/>
            <person name="Jones M."/>
            <person name="Leather S."/>
            <person name="McDonald S."/>
            <person name="McLean J."/>
            <person name="Mooney P."/>
            <person name="Moule S."/>
            <person name="Mungall K.L."/>
            <person name="Murphy L.D."/>
            <person name="Niblett D."/>
            <person name="Odell C."/>
            <person name="Oliver K."/>
            <person name="O'Neil S."/>
            <person name="Pearson D."/>
            <person name="Quail M.A."/>
            <person name="Rabbinowitsch E."/>
            <person name="Rutherford K.M."/>
            <person name="Rutter S."/>
            <person name="Saunders D."/>
            <person name="Seeger K."/>
            <person name="Sharp S."/>
            <person name="Skelton J."/>
            <person name="Simmonds M.N."/>
            <person name="Squares R."/>
            <person name="Squares S."/>
            <person name="Stevens K."/>
            <person name="Taylor K."/>
            <person name="Taylor R.G."/>
            <person name="Tivey A."/>
            <person name="Walsh S.V."/>
            <person name="Warren T."/>
            <person name="Whitehead S."/>
            <person name="Woodward J.R."/>
            <person name="Volckaert G."/>
            <person name="Aert R."/>
            <person name="Robben J."/>
            <person name="Grymonprez B."/>
            <person name="Weltjens I."/>
            <person name="Vanstreels E."/>
            <person name="Rieger M."/>
            <person name="Schaefer M."/>
            <person name="Mueller-Auer S."/>
            <person name="Gabel C."/>
            <person name="Fuchs M."/>
            <person name="Duesterhoeft A."/>
            <person name="Fritzc C."/>
            <person name="Holzer E."/>
            <person name="Moestl D."/>
            <person name="Hilbert H."/>
            <person name="Borzym K."/>
            <person name="Langer I."/>
            <person name="Beck A."/>
            <person name="Lehrach H."/>
            <person name="Reinhardt R."/>
            <person name="Pohl T.M."/>
            <person name="Eger P."/>
            <person name="Zimmermann W."/>
            <person name="Wedler H."/>
            <person name="Wambutt R."/>
            <person name="Purnelle B."/>
            <person name="Goffeau A."/>
            <person name="Cadieu E."/>
            <person name="Dreano S."/>
            <person name="Gloux S."/>
            <person name="Lelaure V."/>
            <person name="Mottier S."/>
            <person name="Galibert F."/>
            <person name="Aves S.J."/>
            <person name="Xiang Z."/>
            <person name="Hunt C."/>
            <person name="Moore K."/>
            <person name="Hurst S.M."/>
            <person name="Lucas M."/>
            <person name="Rochet M."/>
            <person name="Gaillardin C."/>
            <person name="Tallada V.A."/>
            <person name="Garzon A."/>
            <person name="Thode G."/>
            <person name="Daga R.R."/>
            <person name="Cruzado L."/>
            <person name="Jimenez J."/>
            <person name="Sanchez M."/>
            <person name="del Rey F."/>
            <person name="Benito J."/>
            <person name="Dominguez A."/>
            <person name="Revuelta J.L."/>
            <person name="Moreno S."/>
            <person name="Armstrong J."/>
            <person name="Forsburg S.L."/>
            <person name="Cerutti L."/>
            <person name="Lowe T."/>
            <person name="McCombie W.R."/>
            <person name="Paulsen I."/>
            <person name="Potashkin J."/>
            <person name="Shpakovski G.V."/>
            <person name="Ussery D."/>
            <person name="Barrell B.G."/>
            <person name="Nurse P."/>
        </authorList>
    </citation>
    <scope>NUCLEOTIDE SEQUENCE [LARGE SCALE GENOMIC DNA]</scope>
    <source>
        <strain>972 / ATCC 24843</strain>
    </source>
</reference>
<sequence>MGLLTILRQQKLKEREVRVLLLGLDNAGKTTILKCLLNEDVNEVSPTFGFQIRTLEVEGLRFTIWDIGGQKTLRNFWKNYFESTEAIIWVVDSLDDLRLEECRNTLQELLVEEKLLFTSILVLANKSDVSGALSSEEISKILNISKYKSSHWRIFSVSALTGLNIKDAISWLANDLKEIKLGTIDY</sequence>
<proteinExistence type="inferred from homology"/>
<evidence type="ECO:0000255" key="1"/>
<evidence type="ECO:0000269" key="2">
    <source>
    </source>
</evidence>
<evidence type="ECO:0000305" key="3"/>
<name>ARL_SCHPO</name>
<protein>
    <recommendedName>
        <fullName>ADP-ribosylation factor-like protein alp41</fullName>
    </recommendedName>
    <alternativeName>
        <fullName>Altered polarity protein 41</fullName>
    </alternativeName>
</protein>
<organism>
    <name type="scientific">Schizosaccharomyces pombe (strain 972 / ATCC 24843)</name>
    <name type="common">Fission yeast</name>
    <dbReference type="NCBI Taxonomy" id="284812"/>
    <lineage>
        <taxon>Eukaryota</taxon>
        <taxon>Fungi</taxon>
        <taxon>Dikarya</taxon>
        <taxon>Ascomycota</taxon>
        <taxon>Taphrinomycotina</taxon>
        <taxon>Schizosaccharomycetes</taxon>
        <taxon>Schizosaccharomycetales</taxon>
        <taxon>Schizosaccharomycetaceae</taxon>
        <taxon>Schizosaccharomyces</taxon>
    </lineage>
</organism>
<gene>
    <name type="primary">alp41</name>
    <name type="ORF">SPAC22F3.05c</name>
</gene>
<dbReference type="EMBL" id="AB031326">
    <property type="protein sequence ID" value="BAA83522.1"/>
    <property type="molecule type" value="Genomic_DNA"/>
</dbReference>
<dbReference type="EMBL" id="CU329670">
    <property type="protein sequence ID" value="CAA91070.1"/>
    <property type="molecule type" value="Genomic_DNA"/>
</dbReference>
<dbReference type="PIR" id="T38186">
    <property type="entry name" value="S62420"/>
</dbReference>
<dbReference type="RefSeq" id="NP_593036.1">
    <property type="nucleotide sequence ID" value="NM_001018435.2"/>
</dbReference>
<dbReference type="SMR" id="Q09767"/>
<dbReference type="BioGRID" id="278263">
    <property type="interactions" value="3"/>
</dbReference>
<dbReference type="FunCoup" id="Q09767">
    <property type="interactions" value="137"/>
</dbReference>
<dbReference type="STRING" id="284812.Q09767"/>
<dbReference type="PaxDb" id="4896-SPAC22F3.05c.1"/>
<dbReference type="EnsemblFungi" id="SPAC22F3.05c.1">
    <property type="protein sequence ID" value="SPAC22F3.05c.1:pep"/>
    <property type="gene ID" value="SPAC22F3.05c"/>
</dbReference>
<dbReference type="PomBase" id="SPAC22F3.05c">
    <property type="gene designation" value="alp41"/>
</dbReference>
<dbReference type="VEuPathDB" id="FungiDB:SPAC22F3.05c"/>
<dbReference type="eggNOG" id="KOG0073">
    <property type="taxonomic scope" value="Eukaryota"/>
</dbReference>
<dbReference type="HOGENOM" id="CLU_040729_12_3_1"/>
<dbReference type="InParanoid" id="Q09767"/>
<dbReference type="OMA" id="KTHHWQI"/>
<dbReference type="PhylomeDB" id="Q09767"/>
<dbReference type="BRENDA" id="3.6.5.2">
    <property type="organism ID" value="5613"/>
</dbReference>
<dbReference type="PRO" id="PR:Q09767"/>
<dbReference type="Proteomes" id="UP000002485">
    <property type="component" value="Chromosome I"/>
</dbReference>
<dbReference type="GO" id="GO:0005737">
    <property type="term" value="C:cytoplasm"/>
    <property type="evidence" value="ECO:0000318"/>
    <property type="project" value="GO_Central"/>
</dbReference>
<dbReference type="GO" id="GO:0005829">
    <property type="term" value="C:cytosol"/>
    <property type="evidence" value="ECO:0007005"/>
    <property type="project" value="PomBase"/>
</dbReference>
<dbReference type="GO" id="GO:0005874">
    <property type="term" value="C:microtubule"/>
    <property type="evidence" value="ECO:0007669"/>
    <property type="project" value="UniProtKB-KW"/>
</dbReference>
<dbReference type="GO" id="GO:0015630">
    <property type="term" value="C:microtubule cytoskeleton"/>
    <property type="evidence" value="ECO:0000318"/>
    <property type="project" value="GO_Central"/>
</dbReference>
<dbReference type="GO" id="GO:0005634">
    <property type="term" value="C:nucleus"/>
    <property type="evidence" value="ECO:0007005"/>
    <property type="project" value="PomBase"/>
</dbReference>
<dbReference type="GO" id="GO:0005525">
    <property type="term" value="F:GTP binding"/>
    <property type="evidence" value="ECO:0000318"/>
    <property type="project" value="GO_Central"/>
</dbReference>
<dbReference type="GO" id="GO:0003924">
    <property type="term" value="F:GTPase activity"/>
    <property type="evidence" value="ECO:0000255"/>
    <property type="project" value="PomBase"/>
</dbReference>
<dbReference type="GO" id="GO:0006457">
    <property type="term" value="P:protein folding"/>
    <property type="evidence" value="ECO:0000318"/>
    <property type="project" value="GO_Central"/>
</dbReference>
<dbReference type="GO" id="GO:0007021">
    <property type="term" value="P:tubulin complex assembly"/>
    <property type="evidence" value="ECO:0000266"/>
    <property type="project" value="PomBase"/>
</dbReference>
<dbReference type="CDD" id="cd04154">
    <property type="entry name" value="Arl2"/>
    <property type="match status" value="1"/>
</dbReference>
<dbReference type="FunFam" id="3.40.50.300:FF:001166">
    <property type="entry name" value="ADP-ribosylation factor D"/>
    <property type="match status" value="1"/>
</dbReference>
<dbReference type="Gene3D" id="3.40.50.300">
    <property type="entry name" value="P-loop containing nucleotide triphosphate hydrolases"/>
    <property type="match status" value="1"/>
</dbReference>
<dbReference type="InterPro" id="IPR045873">
    <property type="entry name" value="Arl2"/>
</dbReference>
<dbReference type="InterPro" id="IPR044612">
    <property type="entry name" value="ARL2/3"/>
</dbReference>
<dbReference type="InterPro" id="IPR027417">
    <property type="entry name" value="P-loop_NTPase"/>
</dbReference>
<dbReference type="InterPro" id="IPR005225">
    <property type="entry name" value="Small_GTP-bd"/>
</dbReference>
<dbReference type="InterPro" id="IPR006689">
    <property type="entry name" value="Small_GTPase_ARF/SAR"/>
</dbReference>
<dbReference type="NCBIfam" id="TIGR00231">
    <property type="entry name" value="small_GTP"/>
    <property type="match status" value="1"/>
</dbReference>
<dbReference type="PANTHER" id="PTHR45697">
    <property type="entry name" value="ADP-RIBOSYLATION FACTOR-LIKE PROTEIN 2-RELATED"/>
    <property type="match status" value="1"/>
</dbReference>
<dbReference type="Pfam" id="PF00025">
    <property type="entry name" value="Arf"/>
    <property type="match status" value="1"/>
</dbReference>
<dbReference type="PRINTS" id="PR00328">
    <property type="entry name" value="SAR1GTPBP"/>
</dbReference>
<dbReference type="SMART" id="SM00177">
    <property type="entry name" value="ARF"/>
    <property type="match status" value="1"/>
</dbReference>
<dbReference type="SMART" id="SM00175">
    <property type="entry name" value="RAB"/>
    <property type="match status" value="1"/>
</dbReference>
<dbReference type="SMART" id="SM00178">
    <property type="entry name" value="SAR"/>
    <property type="match status" value="1"/>
</dbReference>
<dbReference type="SUPFAM" id="SSF52540">
    <property type="entry name" value="P-loop containing nucleoside triphosphate hydrolases"/>
    <property type="match status" value="1"/>
</dbReference>
<dbReference type="PROSITE" id="PS51417">
    <property type="entry name" value="ARF"/>
    <property type="match status" value="1"/>
</dbReference>
<accession>Q09767</accession>
<comment type="function">
    <text evidence="2">Has a role in the cofactor-dependent pathway of microtubule biogenesis. Required for growth polarity control.</text>
</comment>
<comment type="subcellular location">
    <subcellularLocation>
        <location>Cytoplasm</location>
        <location>Cytoskeleton</location>
    </subcellularLocation>
</comment>
<comment type="similarity">
    <text evidence="3">Belongs to the small GTPase superfamily. Arf family.</text>
</comment>